<proteinExistence type="inferred from homology"/>
<geneLocation type="plasmid">
    <name>pYV</name>
</geneLocation>
<geneLocation type="plasmid">
    <name>pYVe227</name>
</geneLocation>
<geneLocation type="plasmid">
    <name>pYVa127/90</name>
</geneLocation>
<name>PARD_YEREN</name>
<reference key="1">
    <citation type="submission" date="1998-03" db="EMBL/GenBank/DDBJ databases">
        <title>Detail genetic map of the pYV plasmid of Yersinia enterocolitica.</title>
        <authorList>
            <person name="Iriarte M."/>
            <person name="Cornelis G.R."/>
        </authorList>
    </citation>
    <scope>NUCLEOTIDE SEQUENCE [GENOMIC DNA]</scope>
    <source>
        <plasmid>pYV</plasmid>
    </source>
</reference>
<reference key="2">
    <citation type="submission" date="1998-10" db="EMBL/GenBank/DDBJ databases">
        <title>Detailed genetic map of the pYVe227 plasmid of Yersinia enterocolitica serotype O:9.</title>
        <authorList>
            <person name="Iriarte M."/>
            <person name="Lambermont I."/>
            <person name="Kerbourch C."/>
            <person name="Cornelis G.R."/>
        </authorList>
    </citation>
    <scope>NUCLEOTIDE SEQUENCE [GENOMIC DNA]</scope>
    <source>
        <strain>W22703 / Serotype O:9 / Biotype 2</strain>
        <plasmid>pYVe227</plasmid>
    </source>
</reference>
<reference key="3">
    <citation type="journal article" date="2003" name="Res. Microbiol.">
        <title>DNA sequence and analysis of the pYVa127/90 virulence plasmid of Yersinia enterocolitica strain A127/90.</title>
        <authorList>
            <person name="Foultier B."/>
            <person name="Cornelis G.R."/>
        </authorList>
    </citation>
    <scope>NUCLEOTIDE SEQUENCE [GENOMIC DNA]</scope>
    <source>
        <strain>A127/90 / Serotype O:8 / Biotype 1B</strain>
        <plasmid>pYVa127/90</plasmid>
    </source>
</reference>
<keyword id="KW-0614">Plasmid</keyword>
<keyword id="KW-1277">Toxin-antitoxin system</keyword>
<organism>
    <name type="scientific">Yersinia enterocolitica</name>
    <dbReference type="NCBI Taxonomy" id="630"/>
    <lineage>
        <taxon>Bacteria</taxon>
        <taxon>Pseudomonadati</taxon>
        <taxon>Pseudomonadota</taxon>
        <taxon>Gammaproteobacteria</taxon>
        <taxon>Enterobacterales</taxon>
        <taxon>Yersiniaceae</taxon>
        <taxon>Yersinia</taxon>
    </lineage>
</organism>
<comment type="function">
    <text evidence="1">Antitoxin component of a type II toxin-antitoxin (TA) system. Neutralizes the effect of toxin ParE (By similarity).</text>
</comment>
<comment type="similarity">
    <text evidence="2">Belongs to the ParD antitoxin family.</text>
</comment>
<evidence type="ECO:0000250" key="1"/>
<evidence type="ECO:0000305" key="2"/>
<accession>P0C2N3</accession>
<accession>O85269</accession>
<feature type="chain" id="PRO_0000216357" description="Antitoxin ParD">
    <location>
        <begin position="1"/>
        <end position="80"/>
    </location>
</feature>
<sequence>MARVTSVTLGEHLTGFVGEMIQSGRYGNISEVLRDALRLMEAREQRVQHVRDMVLAGTNAPVSHRLMDEIFSAAVKDTSV</sequence>
<dbReference type="EMBL" id="AF056093">
    <property type="protein sequence ID" value="AAC33681.1"/>
    <property type="molecule type" value="Genomic_DNA"/>
</dbReference>
<dbReference type="EMBL" id="AF102990">
    <property type="protein sequence ID" value="AAD16851.1"/>
    <property type="molecule type" value="Genomic_DNA"/>
</dbReference>
<dbReference type="EMBL" id="AY150843">
    <property type="protein sequence ID" value="AAO39030.1"/>
    <property type="molecule type" value="Genomic_DNA"/>
</dbReference>
<dbReference type="RefSeq" id="NP_052428.1">
    <property type="nucleotide sequence ID" value="NC_002120.1"/>
</dbReference>
<dbReference type="RefSeq" id="NP_783708.1">
    <property type="nucleotide sequence ID" value="NC_004564.1"/>
</dbReference>
<dbReference type="RefSeq" id="NP_863552.1">
    <property type="nucleotide sequence ID" value="NC_005017.1"/>
</dbReference>
<dbReference type="RefSeq" id="WP_005176524.1">
    <property type="nucleotide sequence ID" value="NZ_NWMR01000033.1"/>
</dbReference>
<dbReference type="SMR" id="P0C2N3"/>
<dbReference type="KEGG" id="yet:CH48_4183"/>
<dbReference type="KEGG" id="yew:CH47_4254"/>
<dbReference type="OMA" id="RHADYAK"/>
<dbReference type="GO" id="GO:0006355">
    <property type="term" value="P:regulation of DNA-templated transcription"/>
    <property type="evidence" value="ECO:0007669"/>
    <property type="project" value="InterPro"/>
</dbReference>
<dbReference type="CDD" id="cd22231">
    <property type="entry name" value="RHH_NikR_HicB-like"/>
    <property type="match status" value="1"/>
</dbReference>
<dbReference type="Gene3D" id="6.10.10.120">
    <property type="entry name" value="Antitoxin ParD1-like"/>
    <property type="match status" value="1"/>
</dbReference>
<dbReference type="InterPro" id="IPR022789">
    <property type="entry name" value="ParD"/>
</dbReference>
<dbReference type="InterPro" id="IPR038296">
    <property type="entry name" value="ParD_sf"/>
</dbReference>
<dbReference type="InterPro" id="IPR010985">
    <property type="entry name" value="Ribbon_hlx_hlx"/>
</dbReference>
<dbReference type="NCBIfam" id="TIGR02606">
    <property type="entry name" value="antidote_CC2985"/>
    <property type="match status" value="1"/>
</dbReference>
<dbReference type="PANTHER" id="PTHR36582">
    <property type="entry name" value="ANTITOXIN PARD"/>
    <property type="match status" value="1"/>
</dbReference>
<dbReference type="PANTHER" id="PTHR36582:SF2">
    <property type="entry name" value="ANTITOXIN PARD"/>
    <property type="match status" value="1"/>
</dbReference>
<dbReference type="Pfam" id="PF03693">
    <property type="entry name" value="ParD_antitoxin"/>
    <property type="match status" value="1"/>
</dbReference>
<dbReference type="SUPFAM" id="SSF47598">
    <property type="entry name" value="Ribbon-helix-helix"/>
    <property type="match status" value="1"/>
</dbReference>
<gene>
    <name type="primary">parD</name>
</gene>
<protein>
    <recommendedName>
        <fullName>Antitoxin ParD</fullName>
    </recommendedName>
</protein>